<accession>Q4JVD9</accession>
<keyword id="KW-0067">ATP-binding</keyword>
<keyword id="KW-0963">Cytoplasm</keyword>
<keyword id="KW-0227">DNA damage</keyword>
<keyword id="KW-0233">DNA recombination</keyword>
<keyword id="KW-0234">DNA repair</keyword>
<keyword id="KW-0238">DNA-binding</keyword>
<keyword id="KW-0378">Hydrolase</keyword>
<keyword id="KW-0547">Nucleotide-binding</keyword>
<keyword id="KW-1185">Reference proteome</keyword>
<comment type="function">
    <text evidence="1">The RuvA-RuvB-RuvC complex processes Holliday junction (HJ) DNA during genetic recombination and DNA repair, while the RuvA-RuvB complex plays an important role in the rescue of blocked DNA replication forks via replication fork reversal (RFR). RuvA specifically binds to HJ cruciform DNA, conferring on it an open structure. The RuvB hexamer acts as an ATP-dependent pump, pulling dsDNA into and through the RuvAB complex. RuvB forms 2 homohexamers on either side of HJ DNA bound by 1 or 2 RuvA tetramers; 4 subunits per hexamer contact DNA at a time. Coordinated motions by a converter formed by DNA-disengaged RuvB subunits stimulates ATP hydrolysis and nucleotide exchange. Immobilization of the converter enables RuvB to convert the ATP-contained energy into a lever motion, pulling 2 nucleotides of DNA out of the RuvA tetramer per ATP hydrolyzed, thus driving DNA branch migration. The RuvB motors rotate together with the DNA substrate, which together with the progressing nucleotide cycle form the mechanistic basis for DNA recombination by continuous HJ branch migration. Branch migration allows RuvC to scan DNA until it finds its consensus sequence, where it cleaves and resolves cruciform DNA.</text>
</comment>
<comment type="catalytic activity">
    <reaction evidence="1">
        <text>ATP + H2O = ADP + phosphate + H(+)</text>
        <dbReference type="Rhea" id="RHEA:13065"/>
        <dbReference type="ChEBI" id="CHEBI:15377"/>
        <dbReference type="ChEBI" id="CHEBI:15378"/>
        <dbReference type="ChEBI" id="CHEBI:30616"/>
        <dbReference type="ChEBI" id="CHEBI:43474"/>
        <dbReference type="ChEBI" id="CHEBI:456216"/>
    </reaction>
</comment>
<comment type="subunit">
    <text evidence="1">Homohexamer. Forms an RuvA(8)-RuvB(12)-Holliday junction (HJ) complex. HJ DNA is sandwiched between 2 RuvA tetramers; dsDNA enters through RuvA and exits via RuvB. An RuvB hexamer assembles on each DNA strand where it exits the tetramer. Each RuvB hexamer is contacted by two RuvA subunits (via domain III) on 2 adjacent RuvB subunits; this complex drives branch migration. In the full resolvosome a probable DNA-RuvA(4)-RuvB(12)-RuvC(2) complex forms which resolves the HJ.</text>
</comment>
<comment type="subcellular location">
    <subcellularLocation>
        <location evidence="1">Cytoplasm</location>
    </subcellularLocation>
</comment>
<comment type="domain">
    <text evidence="1">Has 3 domains, the large (RuvB-L) and small ATPase (RuvB-S) domains and the C-terminal head (RuvB-H) domain. The head domain binds DNA, while the ATPase domains jointly bind ATP, ADP or are empty depending on the state of the subunit in the translocation cycle. During a single DNA translocation step the structure of each domain remains the same, but their relative positions change.</text>
</comment>
<comment type="similarity">
    <text evidence="1">Belongs to the RuvB family.</text>
</comment>
<feature type="chain" id="PRO_0000235361" description="Holliday junction branch migration complex subunit RuvB">
    <location>
        <begin position="1"/>
        <end position="354"/>
    </location>
</feature>
<feature type="region of interest" description="Disordered" evidence="2">
    <location>
        <begin position="1"/>
        <end position="38"/>
    </location>
</feature>
<feature type="region of interest" description="Large ATPase domain (RuvB-L)" evidence="1">
    <location>
        <begin position="2"/>
        <end position="199"/>
    </location>
</feature>
<feature type="region of interest" description="Small ATPAse domain (RuvB-S)" evidence="1">
    <location>
        <begin position="200"/>
        <end position="270"/>
    </location>
</feature>
<feature type="region of interest" description="Head domain (RuvB-H)" evidence="1">
    <location>
        <begin position="273"/>
        <end position="354"/>
    </location>
</feature>
<feature type="compositionally biased region" description="Polar residues" evidence="2">
    <location>
        <begin position="17"/>
        <end position="30"/>
    </location>
</feature>
<feature type="binding site" evidence="1">
    <location>
        <position position="38"/>
    </location>
    <ligand>
        <name>ATP</name>
        <dbReference type="ChEBI" id="CHEBI:30616"/>
    </ligand>
</feature>
<feature type="binding site" evidence="1">
    <location>
        <position position="39"/>
    </location>
    <ligand>
        <name>ATP</name>
        <dbReference type="ChEBI" id="CHEBI:30616"/>
    </ligand>
</feature>
<feature type="binding site" evidence="1">
    <location>
        <position position="80"/>
    </location>
    <ligand>
        <name>ATP</name>
        <dbReference type="ChEBI" id="CHEBI:30616"/>
    </ligand>
</feature>
<feature type="binding site" evidence="1">
    <location>
        <position position="83"/>
    </location>
    <ligand>
        <name>ATP</name>
        <dbReference type="ChEBI" id="CHEBI:30616"/>
    </ligand>
</feature>
<feature type="binding site" evidence="1">
    <location>
        <position position="84"/>
    </location>
    <ligand>
        <name>ATP</name>
        <dbReference type="ChEBI" id="CHEBI:30616"/>
    </ligand>
</feature>
<feature type="binding site" evidence="1">
    <location>
        <position position="84"/>
    </location>
    <ligand>
        <name>Mg(2+)</name>
        <dbReference type="ChEBI" id="CHEBI:18420"/>
    </ligand>
</feature>
<feature type="binding site" evidence="1">
    <location>
        <position position="85"/>
    </location>
    <ligand>
        <name>ATP</name>
        <dbReference type="ChEBI" id="CHEBI:30616"/>
    </ligand>
</feature>
<feature type="binding site" evidence="1">
    <location>
        <begin position="146"/>
        <end position="148"/>
    </location>
    <ligand>
        <name>ATP</name>
        <dbReference type="ChEBI" id="CHEBI:30616"/>
    </ligand>
</feature>
<feature type="binding site" evidence="1">
    <location>
        <position position="189"/>
    </location>
    <ligand>
        <name>ATP</name>
        <dbReference type="ChEBI" id="CHEBI:30616"/>
    </ligand>
</feature>
<feature type="binding site" evidence="1">
    <location>
        <position position="199"/>
    </location>
    <ligand>
        <name>ATP</name>
        <dbReference type="ChEBI" id="CHEBI:30616"/>
    </ligand>
</feature>
<feature type="binding site" evidence="1">
    <location>
        <position position="236"/>
    </location>
    <ligand>
        <name>ATP</name>
        <dbReference type="ChEBI" id="CHEBI:30616"/>
    </ligand>
</feature>
<feature type="binding site" evidence="1">
    <location>
        <position position="328"/>
    </location>
    <ligand>
        <name>DNA</name>
        <dbReference type="ChEBI" id="CHEBI:16991"/>
    </ligand>
</feature>
<feature type="binding site" evidence="1">
    <location>
        <position position="333"/>
    </location>
    <ligand>
        <name>DNA</name>
        <dbReference type="ChEBI" id="CHEBI:16991"/>
    </ligand>
</feature>
<evidence type="ECO:0000255" key="1">
    <source>
        <dbReference type="HAMAP-Rule" id="MF_00016"/>
    </source>
</evidence>
<evidence type="ECO:0000256" key="2">
    <source>
        <dbReference type="SAM" id="MobiDB-lite"/>
    </source>
</evidence>
<reference key="1">
    <citation type="journal article" date="2005" name="J. Bacteriol.">
        <title>Complete genome sequence and analysis of the multiresistant nosocomial pathogen Corynebacterium jeikeium K411, a lipid-requiring bacterium of the human skin flora.</title>
        <authorList>
            <person name="Tauch A."/>
            <person name="Kaiser O."/>
            <person name="Hain T."/>
            <person name="Goesmann A."/>
            <person name="Weisshaar B."/>
            <person name="Albersmeier A."/>
            <person name="Bekel T."/>
            <person name="Bischoff N."/>
            <person name="Brune I."/>
            <person name="Chakraborty T."/>
            <person name="Kalinowski J."/>
            <person name="Meyer F."/>
            <person name="Rupp O."/>
            <person name="Schneiker S."/>
            <person name="Viehoever P."/>
            <person name="Puehler A."/>
        </authorList>
    </citation>
    <scope>NUCLEOTIDE SEQUENCE [LARGE SCALE GENOMIC DNA]</scope>
    <source>
        <strain>K411</strain>
    </source>
</reference>
<organism>
    <name type="scientific">Corynebacterium jeikeium (strain K411)</name>
    <dbReference type="NCBI Taxonomy" id="306537"/>
    <lineage>
        <taxon>Bacteria</taxon>
        <taxon>Bacillati</taxon>
        <taxon>Actinomycetota</taxon>
        <taxon>Actinomycetes</taxon>
        <taxon>Mycobacteriales</taxon>
        <taxon>Corynebacteriaceae</taxon>
        <taxon>Corynebacterium</taxon>
    </lineage>
</organism>
<proteinExistence type="inferred from homology"/>
<gene>
    <name evidence="1" type="primary">ruvB</name>
    <name type="ordered locus">jk1054</name>
</gene>
<protein>
    <recommendedName>
        <fullName evidence="1">Holliday junction branch migration complex subunit RuvB</fullName>
        <ecNumber evidence="1">3.6.4.-</ecNumber>
    </recommendedName>
</protein>
<name>RUVB_CORJK</name>
<sequence length="354" mass="37705">MSDFERTEFELPPGVGHSQNEDLNPQQTAGDSDIDTSLRPKSLDEFIGQPKVRTQLDLVLGGARSRGVAPDHVLLAGPPGLGKTTMAMIIAQELGSSLRMTSGPALERAGDLAAMLSNLMEGDVLFIDEIHRMARPAEEMLYMAMEDFRIDVIVGKGPGATSIPIEIAPFTLVGATTRAGMLTGPLRDRFGFTAQMEFYDTADLTRVVTRAAGILGVDITGDAAAEIASRSRGTPRIANRLLRRVRDFADVNADGKITVEVARAALLVFDVDESGLDRLDRAVIEALVKGHGGGPVGVNTLALAVGEEPSTVEEVCEPYLVRAGMVSRTPRGRVATAAAWRHIGLEPPEGTIGL</sequence>
<dbReference type="EC" id="3.6.4.-" evidence="1"/>
<dbReference type="EMBL" id="CR931997">
    <property type="protein sequence ID" value="CAI37218.1"/>
    <property type="molecule type" value="Genomic_DNA"/>
</dbReference>
<dbReference type="RefSeq" id="WP_005294952.1">
    <property type="nucleotide sequence ID" value="NC_007164.1"/>
</dbReference>
<dbReference type="SMR" id="Q4JVD9"/>
<dbReference type="STRING" id="306537.jk1054"/>
<dbReference type="GeneID" id="92738568"/>
<dbReference type="KEGG" id="cjk:jk1054"/>
<dbReference type="eggNOG" id="COG2255">
    <property type="taxonomic scope" value="Bacteria"/>
</dbReference>
<dbReference type="HOGENOM" id="CLU_055599_1_0_11"/>
<dbReference type="OrthoDB" id="9804478at2"/>
<dbReference type="Proteomes" id="UP000000545">
    <property type="component" value="Chromosome"/>
</dbReference>
<dbReference type="GO" id="GO:0005737">
    <property type="term" value="C:cytoplasm"/>
    <property type="evidence" value="ECO:0007669"/>
    <property type="project" value="UniProtKB-SubCell"/>
</dbReference>
<dbReference type="GO" id="GO:0048476">
    <property type="term" value="C:Holliday junction resolvase complex"/>
    <property type="evidence" value="ECO:0007669"/>
    <property type="project" value="UniProtKB-UniRule"/>
</dbReference>
<dbReference type="GO" id="GO:0005524">
    <property type="term" value="F:ATP binding"/>
    <property type="evidence" value="ECO:0007669"/>
    <property type="project" value="UniProtKB-UniRule"/>
</dbReference>
<dbReference type="GO" id="GO:0016887">
    <property type="term" value="F:ATP hydrolysis activity"/>
    <property type="evidence" value="ECO:0007669"/>
    <property type="project" value="InterPro"/>
</dbReference>
<dbReference type="GO" id="GO:0000400">
    <property type="term" value="F:four-way junction DNA binding"/>
    <property type="evidence" value="ECO:0007669"/>
    <property type="project" value="UniProtKB-UniRule"/>
</dbReference>
<dbReference type="GO" id="GO:0009378">
    <property type="term" value="F:four-way junction helicase activity"/>
    <property type="evidence" value="ECO:0007669"/>
    <property type="project" value="InterPro"/>
</dbReference>
<dbReference type="GO" id="GO:0006310">
    <property type="term" value="P:DNA recombination"/>
    <property type="evidence" value="ECO:0007669"/>
    <property type="project" value="UniProtKB-UniRule"/>
</dbReference>
<dbReference type="GO" id="GO:0006281">
    <property type="term" value="P:DNA repair"/>
    <property type="evidence" value="ECO:0007669"/>
    <property type="project" value="UniProtKB-UniRule"/>
</dbReference>
<dbReference type="CDD" id="cd00009">
    <property type="entry name" value="AAA"/>
    <property type="match status" value="1"/>
</dbReference>
<dbReference type="FunFam" id="3.40.50.300:FF:000073">
    <property type="entry name" value="Holliday junction ATP-dependent DNA helicase RuvB"/>
    <property type="match status" value="1"/>
</dbReference>
<dbReference type="Gene3D" id="1.10.8.60">
    <property type="match status" value="1"/>
</dbReference>
<dbReference type="Gene3D" id="3.40.50.300">
    <property type="entry name" value="P-loop containing nucleotide triphosphate hydrolases"/>
    <property type="match status" value="1"/>
</dbReference>
<dbReference type="Gene3D" id="1.10.10.10">
    <property type="entry name" value="Winged helix-like DNA-binding domain superfamily/Winged helix DNA-binding domain"/>
    <property type="match status" value="1"/>
</dbReference>
<dbReference type="HAMAP" id="MF_00016">
    <property type="entry name" value="DNA_HJ_migration_RuvB"/>
    <property type="match status" value="1"/>
</dbReference>
<dbReference type="InterPro" id="IPR003593">
    <property type="entry name" value="AAA+_ATPase"/>
</dbReference>
<dbReference type="InterPro" id="IPR041445">
    <property type="entry name" value="AAA_lid_4"/>
</dbReference>
<dbReference type="InterPro" id="IPR004605">
    <property type="entry name" value="DNA_helicase_Holl-junc_RuvB"/>
</dbReference>
<dbReference type="InterPro" id="IPR027417">
    <property type="entry name" value="P-loop_NTPase"/>
</dbReference>
<dbReference type="InterPro" id="IPR008824">
    <property type="entry name" value="RuvB-like_N"/>
</dbReference>
<dbReference type="InterPro" id="IPR008823">
    <property type="entry name" value="RuvB_C"/>
</dbReference>
<dbReference type="InterPro" id="IPR036388">
    <property type="entry name" value="WH-like_DNA-bd_sf"/>
</dbReference>
<dbReference type="InterPro" id="IPR036390">
    <property type="entry name" value="WH_DNA-bd_sf"/>
</dbReference>
<dbReference type="NCBIfam" id="NF000868">
    <property type="entry name" value="PRK00080.1"/>
    <property type="match status" value="1"/>
</dbReference>
<dbReference type="NCBIfam" id="TIGR00635">
    <property type="entry name" value="ruvB"/>
    <property type="match status" value="1"/>
</dbReference>
<dbReference type="PANTHER" id="PTHR42848">
    <property type="match status" value="1"/>
</dbReference>
<dbReference type="PANTHER" id="PTHR42848:SF1">
    <property type="entry name" value="HOLLIDAY JUNCTION BRANCH MIGRATION COMPLEX SUBUNIT RUVB"/>
    <property type="match status" value="1"/>
</dbReference>
<dbReference type="Pfam" id="PF17864">
    <property type="entry name" value="AAA_lid_4"/>
    <property type="match status" value="1"/>
</dbReference>
<dbReference type="Pfam" id="PF05491">
    <property type="entry name" value="RuvB_C"/>
    <property type="match status" value="1"/>
</dbReference>
<dbReference type="Pfam" id="PF05496">
    <property type="entry name" value="RuvB_N"/>
    <property type="match status" value="1"/>
</dbReference>
<dbReference type="SMART" id="SM00382">
    <property type="entry name" value="AAA"/>
    <property type="match status" value="1"/>
</dbReference>
<dbReference type="SUPFAM" id="SSF52540">
    <property type="entry name" value="P-loop containing nucleoside triphosphate hydrolases"/>
    <property type="match status" value="1"/>
</dbReference>
<dbReference type="SUPFAM" id="SSF46785">
    <property type="entry name" value="Winged helix' DNA-binding domain"/>
    <property type="match status" value="1"/>
</dbReference>